<sequence length="391" mass="43521">MIRRSAVSRVVAEGSAIASDSGFALGASQYDAVVLLSFGGPEGPEDVVPFLKKVTSGRGVPDERLYEVAEHYNHFSGISPINDCNRRLRGALEKELFSRGIRIPVLWANRNWQPQLEEVLREAYDRGFRAFLTLFTSAYSCYSSCRQYREDIAHAVERAGLSGRIIVDKLRQFFDHPGFVLPFIEGIQDCLEQVKERGFKVSRTAILFSTHSIPELDAAFSGPEDAHFGKYGAYVSQHKAVVEVIMSRLRVTDPDLQNYQLVYQSRSGDPSTPWLEPDINDAIRVLRGCEAVLIVPLGFISDHMEVLWDLDNESMQTARECGLFAIRTPTPGTHPLYISGMVDLIVERLEGVPRSARPAMTDLGPWFDVCQPGCCKNSRSGFKPAYGGVAP</sequence>
<comment type="function">
    <text evidence="1">Involved in coproporphyrin-dependent heme b biosynthesis. Catalyzes the insertion of ferrous iron into coproporphyrin III to form Fe-coproporphyrin III.</text>
</comment>
<comment type="catalytic activity">
    <reaction evidence="1">
        <text>Fe-coproporphyrin III + 2 H(+) = coproporphyrin III + Fe(2+)</text>
        <dbReference type="Rhea" id="RHEA:49572"/>
        <dbReference type="ChEBI" id="CHEBI:15378"/>
        <dbReference type="ChEBI" id="CHEBI:29033"/>
        <dbReference type="ChEBI" id="CHEBI:68438"/>
        <dbReference type="ChEBI" id="CHEBI:131725"/>
        <dbReference type="EC" id="4.99.1.9"/>
    </reaction>
    <physiologicalReaction direction="right-to-left" evidence="1">
        <dbReference type="Rhea" id="RHEA:49574"/>
    </physiologicalReaction>
</comment>
<comment type="pathway">
    <text evidence="1">Porphyrin-containing compound metabolism; protoheme biosynthesis.</text>
</comment>
<comment type="subcellular location">
    <subcellularLocation>
        <location evidence="1">Cytoplasm</location>
    </subcellularLocation>
</comment>
<comment type="similarity">
    <text evidence="1">Belongs to the ferrochelatase family.</text>
</comment>
<reference key="1">
    <citation type="journal article" date="2003" name="Lancet">
        <title>Sequencing and analysis of the genome of the Whipple's disease bacterium Tropheryma whipplei.</title>
        <authorList>
            <person name="Bentley S.D."/>
            <person name="Maiwald M."/>
            <person name="Murphy L.D."/>
            <person name="Pallen M.J."/>
            <person name="Yeats C.A."/>
            <person name="Dover L.G."/>
            <person name="Norbertczak H.T."/>
            <person name="Besra G.S."/>
            <person name="Quail M.A."/>
            <person name="Harris D.E."/>
            <person name="von Herbay A."/>
            <person name="Goble A."/>
            <person name="Rutter S."/>
            <person name="Squares R."/>
            <person name="Squares S."/>
            <person name="Barrell B.G."/>
            <person name="Parkhill J."/>
            <person name="Relman D.A."/>
        </authorList>
    </citation>
    <scope>NUCLEOTIDE SEQUENCE [LARGE SCALE GENOMIC DNA]</scope>
    <source>
        <strain>TW08/27</strain>
    </source>
</reference>
<dbReference type="EC" id="4.99.1.9" evidence="1"/>
<dbReference type="EMBL" id="BX251412">
    <property type="protein sequence ID" value="CAD67406.1"/>
    <property type="molecule type" value="Genomic_DNA"/>
</dbReference>
<dbReference type="RefSeq" id="WP_011096684.1">
    <property type="nucleotide sequence ID" value="NC_004551.1"/>
</dbReference>
<dbReference type="SMR" id="Q83H94"/>
<dbReference type="GeneID" id="67388528"/>
<dbReference type="KEGG" id="tws:TW747"/>
<dbReference type="HOGENOM" id="CLU_018884_2_0_11"/>
<dbReference type="UniPathway" id="UPA00252"/>
<dbReference type="GO" id="GO:0005737">
    <property type="term" value="C:cytoplasm"/>
    <property type="evidence" value="ECO:0007669"/>
    <property type="project" value="UniProtKB-SubCell"/>
</dbReference>
<dbReference type="GO" id="GO:0004325">
    <property type="term" value="F:ferrochelatase activity"/>
    <property type="evidence" value="ECO:0007669"/>
    <property type="project" value="UniProtKB-UniRule"/>
</dbReference>
<dbReference type="GO" id="GO:0046872">
    <property type="term" value="F:metal ion binding"/>
    <property type="evidence" value="ECO:0007669"/>
    <property type="project" value="UniProtKB-KW"/>
</dbReference>
<dbReference type="GO" id="GO:0006783">
    <property type="term" value="P:heme biosynthetic process"/>
    <property type="evidence" value="ECO:0007669"/>
    <property type="project" value="UniProtKB-UniRule"/>
</dbReference>
<dbReference type="CDD" id="cd00419">
    <property type="entry name" value="Ferrochelatase_C"/>
    <property type="match status" value="1"/>
</dbReference>
<dbReference type="CDD" id="cd03411">
    <property type="entry name" value="Ferrochelatase_N"/>
    <property type="match status" value="1"/>
</dbReference>
<dbReference type="Gene3D" id="3.40.50.1400">
    <property type="match status" value="2"/>
</dbReference>
<dbReference type="HAMAP" id="MF_00323">
    <property type="entry name" value="Ferrochelatase"/>
    <property type="match status" value="1"/>
</dbReference>
<dbReference type="InterPro" id="IPR001015">
    <property type="entry name" value="Ferrochelatase"/>
</dbReference>
<dbReference type="InterPro" id="IPR019772">
    <property type="entry name" value="Ferrochelatase_AS"/>
</dbReference>
<dbReference type="InterPro" id="IPR033644">
    <property type="entry name" value="Ferrochelatase_C"/>
</dbReference>
<dbReference type="InterPro" id="IPR033659">
    <property type="entry name" value="Ferrochelatase_N"/>
</dbReference>
<dbReference type="NCBIfam" id="NF000689">
    <property type="entry name" value="PRK00035.2-1"/>
    <property type="match status" value="1"/>
</dbReference>
<dbReference type="PANTHER" id="PTHR11108">
    <property type="entry name" value="FERROCHELATASE"/>
    <property type="match status" value="1"/>
</dbReference>
<dbReference type="PANTHER" id="PTHR11108:SF1">
    <property type="entry name" value="FERROCHELATASE, MITOCHONDRIAL"/>
    <property type="match status" value="1"/>
</dbReference>
<dbReference type="Pfam" id="PF00762">
    <property type="entry name" value="Ferrochelatase"/>
    <property type="match status" value="1"/>
</dbReference>
<dbReference type="SUPFAM" id="SSF53800">
    <property type="entry name" value="Chelatase"/>
    <property type="match status" value="1"/>
</dbReference>
<dbReference type="PROSITE" id="PS00534">
    <property type="entry name" value="FERROCHELATASE"/>
    <property type="match status" value="1"/>
</dbReference>
<name>CPFC_TROW8</name>
<accession>Q83H94</accession>
<proteinExistence type="inferred from homology"/>
<keyword id="KW-0963">Cytoplasm</keyword>
<keyword id="KW-0350">Heme biosynthesis</keyword>
<keyword id="KW-0408">Iron</keyword>
<keyword id="KW-0456">Lyase</keyword>
<keyword id="KW-0479">Metal-binding</keyword>
<keyword id="KW-0627">Porphyrin biosynthesis</keyword>
<evidence type="ECO:0000255" key="1">
    <source>
        <dbReference type="HAMAP-Rule" id="MF_00323"/>
    </source>
</evidence>
<gene>
    <name evidence="1" type="primary">cpfC</name>
    <name type="ordered locus">TW747</name>
</gene>
<organism>
    <name type="scientific">Tropheryma whipplei (strain TW08/27)</name>
    <name type="common">Whipple's bacillus</name>
    <dbReference type="NCBI Taxonomy" id="218496"/>
    <lineage>
        <taxon>Bacteria</taxon>
        <taxon>Bacillati</taxon>
        <taxon>Actinomycetota</taxon>
        <taxon>Actinomycetes</taxon>
        <taxon>Micrococcales</taxon>
        <taxon>Tropherymataceae</taxon>
        <taxon>Tropheryma</taxon>
    </lineage>
</organism>
<feature type="chain" id="PRO_0000175220" description="Coproporphyrin III ferrochelatase">
    <location>
        <begin position="1"/>
        <end position="391"/>
    </location>
</feature>
<feature type="binding site" evidence="1">
    <location>
        <position position="79"/>
    </location>
    <ligand>
        <name>Fe-coproporphyrin III</name>
        <dbReference type="ChEBI" id="CHEBI:68438"/>
    </ligand>
</feature>
<feature type="binding site" evidence="1">
    <location>
        <position position="148"/>
    </location>
    <ligand>
        <name>Fe-coproporphyrin III</name>
        <dbReference type="ChEBI" id="CHEBI:68438"/>
    </ligand>
</feature>
<feature type="binding site" evidence="1">
    <location>
        <position position="211"/>
    </location>
    <ligand>
        <name>Fe(2+)</name>
        <dbReference type="ChEBI" id="CHEBI:29033"/>
    </ligand>
</feature>
<feature type="binding site" evidence="1">
    <location>
        <position position="305"/>
    </location>
    <ligand>
        <name>Fe(2+)</name>
        <dbReference type="ChEBI" id="CHEBI:29033"/>
    </ligand>
</feature>
<protein>
    <recommendedName>
        <fullName evidence="1">Coproporphyrin III ferrochelatase</fullName>
        <ecNumber evidence="1">4.99.1.9</ecNumber>
    </recommendedName>
</protein>